<name>RL20_GLOVI</name>
<evidence type="ECO:0000255" key="1">
    <source>
        <dbReference type="HAMAP-Rule" id="MF_00382"/>
    </source>
</evidence>
<evidence type="ECO:0000305" key="2"/>
<feature type="chain" id="PRO_0000177163" description="Large ribosomal subunit protein bL20">
    <location>
        <begin position="1"/>
        <end position="119"/>
    </location>
</feature>
<gene>
    <name evidence="1" type="primary">rplT</name>
    <name evidence="1" type="synonym">rpl20</name>
    <name type="ordered locus">gll2784</name>
</gene>
<comment type="function">
    <text evidence="1">Binds directly to 23S ribosomal RNA and is necessary for the in vitro assembly process of the 50S ribosomal subunit. It is not involved in the protein synthesizing functions of that subunit.</text>
</comment>
<comment type="similarity">
    <text evidence="1">Belongs to the bacterial ribosomal protein bL20 family.</text>
</comment>
<keyword id="KW-1185">Reference proteome</keyword>
<keyword id="KW-0687">Ribonucleoprotein</keyword>
<keyword id="KW-0689">Ribosomal protein</keyword>
<keyword id="KW-0694">RNA-binding</keyword>
<keyword id="KW-0699">rRNA-binding</keyword>
<sequence length="119" mass="13636">MVRVKRGNVARKRRKKILKLAKGFRGSHSKLFTAANQQVMKALRNAYRHRRTKKRDFRSLWIVRINAQARTEGLSYSRLIDGLHKADVALNRKMLAQLAVTDPEAFAEVARVAKSARPV</sequence>
<protein>
    <recommendedName>
        <fullName evidence="1">Large ribosomal subunit protein bL20</fullName>
    </recommendedName>
    <alternativeName>
        <fullName evidence="2">50S ribosomal protein L20</fullName>
    </alternativeName>
</protein>
<organism>
    <name type="scientific">Gloeobacter violaceus (strain ATCC 29082 / PCC 7421)</name>
    <dbReference type="NCBI Taxonomy" id="251221"/>
    <lineage>
        <taxon>Bacteria</taxon>
        <taxon>Bacillati</taxon>
        <taxon>Cyanobacteriota</taxon>
        <taxon>Cyanophyceae</taxon>
        <taxon>Gloeobacterales</taxon>
        <taxon>Gloeobacteraceae</taxon>
        <taxon>Gloeobacter</taxon>
    </lineage>
</organism>
<accession>Q7NGV3</accession>
<reference key="1">
    <citation type="journal article" date="2003" name="DNA Res.">
        <title>Complete genome structure of Gloeobacter violaceus PCC 7421, a cyanobacterium that lacks thylakoids.</title>
        <authorList>
            <person name="Nakamura Y."/>
            <person name="Kaneko T."/>
            <person name="Sato S."/>
            <person name="Mimuro M."/>
            <person name="Miyashita H."/>
            <person name="Tsuchiya T."/>
            <person name="Sasamoto S."/>
            <person name="Watanabe A."/>
            <person name="Kawashima K."/>
            <person name="Kishida Y."/>
            <person name="Kiyokawa C."/>
            <person name="Kohara M."/>
            <person name="Matsumoto M."/>
            <person name="Matsuno A."/>
            <person name="Nakazaki N."/>
            <person name="Shimpo S."/>
            <person name="Takeuchi C."/>
            <person name="Yamada M."/>
            <person name="Tabata S."/>
        </authorList>
    </citation>
    <scope>NUCLEOTIDE SEQUENCE [LARGE SCALE GENOMIC DNA]</scope>
    <source>
        <strain>ATCC 29082 / PCC 7421</strain>
    </source>
</reference>
<dbReference type="EMBL" id="BA000045">
    <property type="protein sequence ID" value="BAC90725.1"/>
    <property type="molecule type" value="Genomic_DNA"/>
</dbReference>
<dbReference type="RefSeq" id="NP_925730.1">
    <property type="nucleotide sequence ID" value="NC_005125.1"/>
</dbReference>
<dbReference type="RefSeq" id="WP_011142778.1">
    <property type="nucleotide sequence ID" value="NC_005125.1"/>
</dbReference>
<dbReference type="SMR" id="Q7NGV3"/>
<dbReference type="FunCoup" id="Q7NGV3">
    <property type="interactions" value="298"/>
</dbReference>
<dbReference type="STRING" id="251221.gene:10760287"/>
<dbReference type="EnsemblBacteria" id="BAC90725">
    <property type="protein sequence ID" value="BAC90725"/>
    <property type="gene ID" value="BAC90725"/>
</dbReference>
<dbReference type="KEGG" id="gvi:gll2784"/>
<dbReference type="PATRIC" id="fig|251221.4.peg.2813"/>
<dbReference type="eggNOG" id="COG0292">
    <property type="taxonomic scope" value="Bacteria"/>
</dbReference>
<dbReference type="HOGENOM" id="CLU_123265_0_1_3"/>
<dbReference type="InParanoid" id="Q7NGV3"/>
<dbReference type="OrthoDB" id="9808966at2"/>
<dbReference type="PhylomeDB" id="Q7NGV3"/>
<dbReference type="Proteomes" id="UP000000557">
    <property type="component" value="Chromosome"/>
</dbReference>
<dbReference type="GO" id="GO:0022625">
    <property type="term" value="C:cytosolic large ribosomal subunit"/>
    <property type="evidence" value="ECO:0000318"/>
    <property type="project" value="GO_Central"/>
</dbReference>
<dbReference type="GO" id="GO:0019843">
    <property type="term" value="F:rRNA binding"/>
    <property type="evidence" value="ECO:0007669"/>
    <property type="project" value="UniProtKB-UniRule"/>
</dbReference>
<dbReference type="GO" id="GO:0003735">
    <property type="term" value="F:structural constituent of ribosome"/>
    <property type="evidence" value="ECO:0000318"/>
    <property type="project" value="GO_Central"/>
</dbReference>
<dbReference type="GO" id="GO:0000027">
    <property type="term" value="P:ribosomal large subunit assembly"/>
    <property type="evidence" value="ECO:0007669"/>
    <property type="project" value="UniProtKB-UniRule"/>
</dbReference>
<dbReference type="GO" id="GO:0006412">
    <property type="term" value="P:translation"/>
    <property type="evidence" value="ECO:0007669"/>
    <property type="project" value="InterPro"/>
</dbReference>
<dbReference type="CDD" id="cd07026">
    <property type="entry name" value="Ribosomal_L20"/>
    <property type="match status" value="1"/>
</dbReference>
<dbReference type="FunFam" id="1.10.1900.20:FF:000001">
    <property type="entry name" value="50S ribosomal protein L20"/>
    <property type="match status" value="1"/>
</dbReference>
<dbReference type="Gene3D" id="6.10.160.10">
    <property type="match status" value="1"/>
</dbReference>
<dbReference type="Gene3D" id="1.10.1900.20">
    <property type="entry name" value="Ribosomal protein L20"/>
    <property type="match status" value="1"/>
</dbReference>
<dbReference type="HAMAP" id="MF_00382">
    <property type="entry name" value="Ribosomal_bL20"/>
    <property type="match status" value="1"/>
</dbReference>
<dbReference type="InterPro" id="IPR005813">
    <property type="entry name" value="Ribosomal_bL20"/>
</dbReference>
<dbReference type="InterPro" id="IPR049946">
    <property type="entry name" value="RIBOSOMAL_L20_CS"/>
</dbReference>
<dbReference type="InterPro" id="IPR035566">
    <property type="entry name" value="Ribosomal_protein_bL20_C"/>
</dbReference>
<dbReference type="NCBIfam" id="TIGR01032">
    <property type="entry name" value="rplT_bact"/>
    <property type="match status" value="1"/>
</dbReference>
<dbReference type="PANTHER" id="PTHR10986">
    <property type="entry name" value="39S RIBOSOMAL PROTEIN L20"/>
    <property type="match status" value="1"/>
</dbReference>
<dbReference type="Pfam" id="PF00453">
    <property type="entry name" value="Ribosomal_L20"/>
    <property type="match status" value="1"/>
</dbReference>
<dbReference type="PRINTS" id="PR00062">
    <property type="entry name" value="RIBOSOMALL20"/>
</dbReference>
<dbReference type="SUPFAM" id="SSF74731">
    <property type="entry name" value="Ribosomal protein L20"/>
    <property type="match status" value="1"/>
</dbReference>
<dbReference type="PROSITE" id="PS00937">
    <property type="entry name" value="RIBOSOMAL_L20"/>
    <property type="match status" value="1"/>
</dbReference>
<proteinExistence type="inferred from homology"/>